<accession>C0QHQ9</accession>
<keyword id="KW-0067">ATP-binding</keyword>
<keyword id="KW-0173">Coenzyme A biosynthesis</keyword>
<keyword id="KW-0963">Cytoplasm</keyword>
<keyword id="KW-0418">Kinase</keyword>
<keyword id="KW-0479">Metal-binding</keyword>
<keyword id="KW-0547">Nucleotide-binding</keyword>
<keyword id="KW-0630">Potassium</keyword>
<keyword id="KW-1185">Reference proteome</keyword>
<keyword id="KW-0808">Transferase</keyword>
<name>COAX_DESAH</name>
<comment type="function">
    <text evidence="1">Catalyzes the phosphorylation of pantothenate (Pan), the first step in CoA biosynthesis.</text>
</comment>
<comment type="catalytic activity">
    <reaction evidence="1">
        <text>(R)-pantothenate + ATP = (R)-4'-phosphopantothenate + ADP + H(+)</text>
        <dbReference type="Rhea" id="RHEA:16373"/>
        <dbReference type="ChEBI" id="CHEBI:10986"/>
        <dbReference type="ChEBI" id="CHEBI:15378"/>
        <dbReference type="ChEBI" id="CHEBI:29032"/>
        <dbReference type="ChEBI" id="CHEBI:30616"/>
        <dbReference type="ChEBI" id="CHEBI:456216"/>
        <dbReference type="EC" id="2.7.1.33"/>
    </reaction>
</comment>
<comment type="cofactor">
    <cofactor evidence="1">
        <name>NH4(+)</name>
        <dbReference type="ChEBI" id="CHEBI:28938"/>
    </cofactor>
    <cofactor evidence="1">
        <name>K(+)</name>
        <dbReference type="ChEBI" id="CHEBI:29103"/>
    </cofactor>
    <text evidence="1">A monovalent cation. Ammonium or potassium.</text>
</comment>
<comment type="pathway">
    <text evidence="1">Cofactor biosynthesis; coenzyme A biosynthesis; CoA from (R)-pantothenate: step 1/5.</text>
</comment>
<comment type="subunit">
    <text evidence="1">Homodimer.</text>
</comment>
<comment type="subcellular location">
    <subcellularLocation>
        <location evidence="1">Cytoplasm</location>
    </subcellularLocation>
</comment>
<comment type="similarity">
    <text evidence="1">Belongs to the type III pantothenate kinase family.</text>
</comment>
<gene>
    <name evidence="1" type="primary">coaX</name>
    <name type="ordered locus">HRM2_05030</name>
</gene>
<evidence type="ECO:0000255" key="1">
    <source>
        <dbReference type="HAMAP-Rule" id="MF_01274"/>
    </source>
</evidence>
<sequence length="262" mass="28509">MLLVIDVGNTNTVLGVFNGNTLIQDWRIRTIRESTVDEFNLLAKALFVDKKIDLSTIKRTVISSVVPPINSILDTFCTRYLNQKPLWIDPASVKNLMPICYSNPAEVGADRIVNAVAAFERYKTSMIIIDFGTATTFDAISAKGEYLGGAITPGVMISAEALFQRASKLPRVEIFRRPQNVIGKNTIDSIKSGIIYGNGALVDGMVKRMSKEMGTTPKVIATGGLAVLIADASETIEIVDNALTLEGLRIIADQPVFSEGQR</sequence>
<protein>
    <recommendedName>
        <fullName evidence="1">Type III pantothenate kinase</fullName>
        <ecNumber evidence="1">2.7.1.33</ecNumber>
    </recommendedName>
    <alternativeName>
        <fullName evidence="1">PanK-III</fullName>
    </alternativeName>
    <alternativeName>
        <fullName evidence="1">Pantothenic acid kinase</fullName>
    </alternativeName>
</protein>
<feature type="chain" id="PRO_1000214185" description="Type III pantothenate kinase">
    <location>
        <begin position="1"/>
        <end position="262"/>
    </location>
</feature>
<feature type="active site" description="Proton acceptor" evidence="1">
    <location>
        <position position="110"/>
    </location>
</feature>
<feature type="binding site" evidence="1">
    <location>
        <begin position="6"/>
        <end position="13"/>
    </location>
    <ligand>
        <name>ATP</name>
        <dbReference type="ChEBI" id="CHEBI:30616"/>
    </ligand>
</feature>
<feature type="binding site" evidence="1">
    <location>
        <position position="101"/>
    </location>
    <ligand>
        <name>substrate</name>
    </ligand>
</feature>
<feature type="binding site" evidence="1">
    <location>
        <begin position="108"/>
        <end position="111"/>
    </location>
    <ligand>
        <name>substrate</name>
    </ligand>
</feature>
<feature type="binding site" evidence="1">
    <location>
        <position position="130"/>
    </location>
    <ligand>
        <name>K(+)</name>
        <dbReference type="ChEBI" id="CHEBI:29103"/>
    </ligand>
</feature>
<feature type="binding site" evidence="1">
    <location>
        <position position="133"/>
    </location>
    <ligand>
        <name>ATP</name>
        <dbReference type="ChEBI" id="CHEBI:30616"/>
    </ligand>
</feature>
<feature type="binding site" evidence="1">
    <location>
        <position position="186"/>
    </location>
    <ligand>
        <name>substrate</name>
    </ligand>
</feature>
<dbReference type="EC" id="2.7.1.33" evidence="1"/>
<dbReference type="EMBL" id="CP001087">
    <property type="protein sequence ID" value="ACN13617.1"/>
    <property type="molecule type" value="Genomic_DNA"/>
</dbReference>
<dbReference type="RefSeq" id="WP_012662866.1">
    <property type="nucleotide sequence ID" value="NC_012108.1"/>
</dbReference>
<dbReference type="SMR" id="C0QHQ9"/>
<dbReference type="STRING" id="177437.HRM2_05030"/>
<dbReference type="KEGG" id="dat:HRM2_05030"/>
<dbReference type="eggNOG" id="COG1521">
    <property type="taxonomic scope" value="Bacteria"/>
</dbReference>
<dbReference type="HOGENOM" id="CLU_066627_1_0_7"/>
<dbReference type="OrthoDB" id="9804707at2"/>
<dbReference type="UniPathway" id="UPA00241">
    <property type="reaction ID" value="UER00352"/>
</dbReference>
<dbReference type="Proteomes" id="UP000000442">
    <property type="component" value="Chromosome"/>
</dbReference>
<dbReference type="GO" id="GO:0005737">
    <property type="term" value="C:cytoplasm"/>
    <property type="evidence" value="ECO:0007669"/>
    <property type="project" value="UniProtKB-SubCell"/>
</dbReference>
<dbReference type="GO" id="GO:0005524">
    <property type="term" value="F:ATP binding"/>
    <property type="evidence" value="ECO:0007669"/>
    <property type="project" value="UniProtKB-UniRule"/>
</dbReference>
<dbReference type="GO" id="GO:0046872">
    <property type="term" value="F:metal ion binding"/>
    <property type="evidence" value="ECO:0007669"/>
    <property type="project" value="UniProtKB-KW"/>
</dbReference>
<dbReference type="GO" id="GO:0004594">
    <property type="term" value="F:pantothenate kinase activity"/>
    <property type="evidence" value="ECO:0007669"/>
    <property type="project" value="UniProtKB-UniRule"/>
</dbReference>
<dbReference type="GO" id="GO:0015937">
    <property type="term" value="P:coenzyme A biosynthetic process"/>
    <property type="evidence" value="ECO:0007669"/>
    <property type="project" value="UniProtKB-UniRule"/>
</dbReference>
<dbReference type="CDD" id="cd24015">
    <property type="entry name" value="ASKHA_NBD_PanK-III"/>
    <property type="match status" value="1"/>
</dbReference>
<dbReference type="Gene3D" id="3.30.420.40">
    <property type="match status" value="2"/>
</dbReference>
<dbReference type="HAMAP" id="MF_01274">
    <property type="entry name" value="Pantothen_kinase_3"/>
    <property type="match status" value="1"/>
</dbReference>
<dbReference type="InterPro" id="IPR043129">
    <property type="entry name" value="ATPase_NBD"/>
</dbReference>
<dbReference type="InterPro" id="IPR004619">
    <property type="entry name" value="Type_III_PanK"/>
</dbReference>
<dbReference type="NCBIfam" id="TIGR00671">
    <property type="entry name" value="baf"/>
    <property type="match status" value="1"/>
</dbReference>
<dbReference type="NCBIfam" id="NF009848">
    <property type="entry name" value="PRK13318.1-6"/>
    <property type="match status" value="1"/>
</dbReference>
<dbReference type="NCBIfam" id="NF009855">
    <property type="entry name" value="PRK13321.1"/>
    <property type="match status" value="1"/>
</dbReference>
<dbReference type="PANTHER" id="PTHR34265">
    <property type="entry name" value="TYPE III PANTOTHENATE KINASE"/>
    <property type="match status" value="1"/>
</dbReference>
<dbReference type="PANTHER" id="PTHR34265:SF1">
    <property type="entry name" value="TYPE III PANTOTHENATE KINASE"/>
    <property type="match status" value="1"/>
</dbReference>
<dbReference type="Pfam" id="PF03309">
    <property type="entry name" value="Pan_kinase"/>
    <property type="match status" value="1"/>
</dbReference>
<dbReference type="SUPFAM" id="SSF53067">
    <property type="entry name" value="Actin-like ATPase domain"/>
    <property type="match status" value="2"/>
</dbReference>
<reference key="1">
    <citation type="journal article" date="2009" name="Environ. Microbiol.">
        <title>Genome sequence of Desulfobacterium autotrophicum HRM2, a marine sulfate reducer oxidizing organic carbon completely to carbon dioxide.</title>
        <authorList>
            <person name="Strittmatter A.W."/>
            <person name="Liesegang H."/>
            <person name="Rabus R."/>
            <person name="Decker I."/>
            <person name="Amann J."/>
            <person name="Andres S."/>
            <person name="Henne A."/>
            <person name="Fricke W.F."/>
            <person name="Martinez-Arias R."/>
            <person name="Bartels D."/>
            <person name="Goesmann A."/>
            <person name="Krause L."/>
            <person name="Puehler A."/>
            <person name="Klenk H.P."/>
            <person name="Richter M."/>
            <person name="Schuler M."/>
            <person name="Gloeckner F.O."/>
            <person name="Meyerdierks A."/>
            <person name="Gottschalk G."/>
            <person name="Amann R."/>
        </authorList>
    </citation>
    <scope>NUCLEOTIDE SEQUENCE [LARGE SCALE GENOMIC DNA]</scope>
    <source>
        <strain>ATCC 43914 / DSM 3382 / VKM B-1955 / HRM2</strain>
    </source>
</reference>
<proteinExistence type="inferred from homology"/>
<organism>
    <name type="scientific">Desulforapulum autotrophicum (strain ATCC 43914 / DSM 3382 / VKM B-1955 / HRM2)</name>
    <name type="common">Desulfobacterium autotrophicum</name>
    <dbReference type="NCBI Taxonomy" id="177437"/>
    <lineage>
        <taxon>Bacteria</taxon>
        <taxon>Pseudomonadati</taxon>
        <taxon>Thermodesulfobacteriota</taxon>
        <taxon>Desulfobacteria</taxon>
        <taxon>Desulfobacterales</taxon>
        <taxon>Desulfobacteraceae</taxon>
        <taxon>Desulforapulum</taxon>
    </lineage>
</organism>